<accession>Q9ZDH3</accession>
<evidence type="ECO:0000255" key="1">
    <source>
        <dbReference type="HAMAP-Rule" id="MF_01357"/>
    </source>
</evidence>
<sequence>MTLDKLIEKLAAKFRIVITKVAVKDHLAYKIEPHFLLPFLKALKESEELRFTVLTDLFGVDFPKKEKRFEVVYNLLSLKLNKNLIIKTHISEKESIPSAMQILSAAYWYELEVYDMYGVNFNGNNDKRRILTDYDFEGHPLRKDFPLTGYTQVKYDKKLEKVTYEPVNLDIEYREFDFSSHWHSPSYVLPGDEKTEE</sequence>
<keyword id="KW-0997">Cell inner membrane</keyword>
<keyword id="KW-1003">Cell membrane</keyword>
<keyword id="KW-0472">Membrane</keyword>
<keyword id="KW-0520">NAD</keyword>
<keyword id="KW-0874">Quinone</keyword>
<keyword id="KW-1185">Reference proteome</keyword>
<keyword id="KW-1278">Translocase</keyword>
<keyword id="KW-0813">Transport</keyword>
<keyword id="KW-0830">Ubiquinone</keyword>
<protein>
    <recommendedName>
        <fullName evidence="1">NADH-quinone oxidoreductase subunit C</fullName>
        <ecNumber evidence="1">7.1.1.-</ecNumber>
    </recommendedName>
    <alternativeName>
        <fullName evidence="1">NADH dehydrogenase I subunit C</fullName>
    </alternativeName>
    <alternativeName>
        <fullName evidence="1">NDH-1 subunit C</fullName>
    </alternativeName>
</protein>
<organism>
    <name type="scientific">Rickettsia prowazekii (strain Madrid E)</name>
    <dbReference type="NCBI Taxonomy" id="272947"/>
    <lineage>
        <taxon>Bacteria</taxon>
        <taxon>Pseudomonadati</taxon>
        <taxon>Pseudomonadota</taxon>
        <taxon>Alphaproteobacteria</taxon>
        <taxon>Rickettsiales</taxon>
        <taxon>Rickettsiaceae</taxon>
        <taxon>Rickettsieae</taxon>
        <taxon>Rickettsia</taxon>
        <taxon>typhus group</taxon>
    </lineage>
</organism>
<comment type="function">
    <text evidence="1">NDH-1 shuttles electrons from NADH, via FMN and iron-sulfur (Fe-S) centers, to quinones in the respiratory chain. The immediate electron acceptor for the enzyme in this species is believed to be ubiquinone. Couples the redox reaction to proton translocation (for every two electrons transferred, four hydrogen ions are translocated across the cytoplasmic membrane), and thus conserves the redox energy in a proton gradient.</text>
</comment>
<comment type="catalytic activity">
    <reaction evidence="1">
        <text>a quinone + NADH + 5 H(+)(in) = a quinol + NAD(+) + 4 H(+)(out)</text>
        <dbReference type="Rhea" id="RHEA:57888"/>
        <dbReference type="ChEBI" id="CHEBI:15378"/>
        <dbReference type="ChEBI" id="CHEBI:24646"/>
        <dbReference type="ChEBI" id="CHEBI:57540"/>
        <dbReference type="ChEBI" id="CHEBI:57945"/>
        <dbReference type="ChEBI" id="CHEBI:132124"/>
    </reaction>
</comment>
<comment type="subunit">
    <text evidence="1">NDH-1 is composed of 14 different subunits. Subunits NuoB, C, D, E, F, and G constitute the peripheral sector of the complex.</text>
</comment>
<comment type="subcellular location">
    <subcellularLocation>
        <location evidence="1">Cell inner membrane</location>
        <topology evidence="1">Peripheral membrane protein</topology>
        <orientation evidence="1">Cytoplasmic side</orientation>
    </subcellularLocation>
</comment>
<comment type="similarity">
    <text evidence="1">Belongs to the complex I 30 kDa subunit family.</text>
</comment>
<name>NUOC_RICPR</name>
<dbReference type="EC" id="7.1.1.-" evidence="1"/>
<dbReference type="EMBL" id="AJ235271">
    <property type="protein sequence ID" value="CAA14815.1"/>
    <property type="molecule type" value="Genomic_DNA"/>
</dbReference>
<dbReference type="PIR" id="E71692">
    <property type="entry name" value="E71692"/>
</dbReference>
<dbReference type="RefSeq" id="NP_220739.1">
    <property type="nucleotide sequence ID" value="NC_000963.1"/>
</dbReference>
<dbReference type="RefSeq" id="WP_010886275.1">
    <property type="nucleotide sequence ID" value="NC_000963.1"/>
</dbReference>
<dbReference type="SMR" id="Q9ZDH3"/>
<dbReference type="STRING" id="272947.gene:17555435"/>
<dbReference type="EnsemblBacteria" id="CAA14815">
    <property type="protein sequence ID" value="CAA14815"/>
    <property type="gene ID" value="CAA14815"/>
</dbReference>
<dbReference type="KEGG" id="rpr:RP355"/>
<dbReference type="PATRIC" id="fig|272947.5.peg.365"/>
<dbReference type="eggNOG" id="COG0852">
    <property type="taxonomic scope" value="Bacteria"/>
</dbReference>
<dbReference type="HOGENOM" id="CLU_042628_2_1_5"/>
<dbReference type="OrthoDB" id="9803286at2"/>
<dbReference type="Proteomes" id="UP000002480">
    <property type="component" value="Chromosome"/>
</dbReference>
<dbReference type="GO" id="GO:0005886">
    <property type="term" value="C:plasma membrane"/>
    <property type="evidence" value="ECO:0007669"/>
    <property type="project" value="UniProtKB-SubCell"/>
</dbReference>
<dbReference type="GO" id="GO:0008137">
    <property type="term" value="F:NADH dehydrogenase (ubiquinone) activity"/>
    <property type="evidence" value="ECO:0007669"/>
    <property type="project" value="InterPro"/>
</dbReference>
<dbReference type="GO" id="GO:0050136">
    <property type="term" value="F:NADH:ubiquinone reductase (non-electrogenic) activity"/>
    <property type="evidence" value="ECO:0007669"/>
    <property type="project" value="UniProtKB-UniRule"/>
</dbReference>
<dbReference type="GO" id="GO:0048038">
    <property type="term" value="F:quinone binding"/>
    <property type="evidence" value="ECO:0007669"/>
    <property type="project" value="UniProtKB-KW"/>
</dbReference>
<dbReference type="Gene3D" id="3.30.460.80">
    <property type="entry name" value="NADH:ubiquinone oxidoreductase, 30kDa subunit"/>
    <property type="match status" value="1"/>
</dbReference>
<dbReference type="HAMAP" id="MF_01357">
    <property type="entry name" value="NDH1_NuoC"/>
    <property type="match status" value="1"/>
</dbReference>
<dbReference type="InterPro" id="IPR010218">
    <property type="entry name" value="NADH_DH_suC"/>
</dbReference>
<dbReference type="InterPro" id="IPR037232">
    <property type="entry name" value="NADH_quin_OxRdtase_su_C/D-like"/>
</dbReference>
<dbReference type="InterPro" id="IPR001268">
    <property type="entry name" value="NADH_UbQ_OxRdtase_30kDa_su"/>
</dbReference>
<dbReference type="NCBIfam" id="TIGR01961">
    <property type="entry name" value="NuoC_fam"/>
    <property type="match status" value="1"/>
</dbReference>
<dbReference type="NCBIfam" id="NF004731">
    <property type="entry name" value="PRK06074.1-3"/>
    <property type="match status" value="1"/>
</dbReference>
<dbReference type="PANTHER" id="PTHR10884:SF14">
    <property type="entry name" value="NADH DEHYDROGENASE [UBIQUINONE] IRON-SULFUR PROTEIN 3, MITOCHONDRIAL"/>
    <property type="match status" value="1"/>
</dbReference>
<dbReference type="PANTHER" id="PTHR10884">
    <property type="entry name" value="NADH DEHYDROGENASE UBIQUINONE IRON-SULFUR PROTEIN 3"/>
    <property type="match status" value="1"/>
</dbReference>
<dbReference type="Pfam" id="PF00329">
    <property type="entry name" value="Complex1_30kDa"/>
    <property type="match status" value="1"/>
</dbReference>
<dbReference type="SUPFAM" id="SSF143243">
    <property type="entry name" value="Nqo5-like"/>
    <property type="match status" value="1"/>
</dbReference>
<proteinExistence type="inferred from homology"/>
<feature type="chain" id="PRO_0000118677" description="NADH-quinone oxidoreductase subunit C">
    <location>
        <begin position="1"/>
        <end position="197"/>
    </location>
</feature>
<reference key="1">
    <citation type="journal article" date="1998" name="Nature">
        <title>The genome sequence of Rickettsia prowazekii and the origin of mitochondria.</title>
        <authorList>
            <person name="Andersson S.G.E."/>
            <person name="Zomorodipour A."/>
            <person name="Andersson J.O."/>
            <person name="Sicheritz-Ponten T."/>
            <person name="Alsmark U.C.M."/>
            <person name="Podowski R.M."/>
            <person name="Naeslund A.K."/>
            <person name="Eriksson A.-S."/>
            <person name="Winkler H.H."/>
            <person name="Kurland C.G."/>
        </authorList>
    </citation>
    <scope>NUCLEOTIDE SEQUENCE [LARGE SCALE GENOMIC DNA]</scope>
    <source>
        <strain>Madrid E</strain>
    </source>
</reference>
<gene>
    <name evidence="1" type="primary">nuoC</name>
    <name type="ordered locus">RP355</name>
</gene>